<protein>
    <recommendedName>
        <fullName evidence="1">Enoyl-[acyl-carrier-protein] reductase [NADH]</fullName>
        <shortName evidence="1">ENR</shortName>
        <ecNumber evidence="1">1.3.1.9</ecNumber>
    </recommendedName>
</protein>
<feature type="chain" id="PRO_1000070473" description="Enoyl-[acyl-carrier-protein] reductase [NADH]">
    <location>
        <begin position="1"/>
        <end position="397"/>
    </location>
</feature>
<feature type="active site" description="Proton donor" evidence="1">
    <location>
        <position position="235"/>
    </location>
</feature>
<feature type="binding site" evidence="1">
    <location>
        <begin position="48"/>
        <end position="53"/>
    </location>
    <ligand>
        <name>NAD(+)</name>
        <dbReference type="ChEBI" id="CHEBI:57540"/>
    </ligand>
</feature>
<feature type="binding site" evidence="1">
    <location>
        <begin position="74"/>
        <end position="75"/>
    </location>
    <ligand>
        <name>NAD(+)</name>
        <dbReference type="ChEBI" id="CHEBI:57540"/>
    </ligand>
</feature>
<feature type="binding site" evidence="1">
    <location>
        <begin position="111"/>
        <end position="112"/>
    </location>
    <ligand>
        <name>NAD(+)</name>
        <dbReference type="ChEBI" id="CHEBI:57540"/>
    </ligand>
</feature>
<feature type="binding site" evidence="1">
    <location>
        <begin position="139"/>
        <end position="140"/>
    </location>
    <ligand>
        <name>NAD(+)</name>
        <dbReference type="ChEBI" id="CHEBI:57540"/>
    </ligand>
</feature>
<feature type="binding site" evidence="1">
    <location>
        <position position="225"/>
    </location>
    <ligand>
        <name>substrate</name>
    </ligand>
</feature>
<feature type="binding site" evidence="1">
    <location>
        <position position="244"/>
    </location>
    <ligand>
        <name>NAD(+)</name>
        <dbReference type="ChEBI" id="CHEBI:57540"/>
    </ligand>
</feature>
<feature type="binding site" evidence="1">
    <location>
        <begin position="273"/>
        <end position="275"/>
    </location>
    <ligand>
        <name>NAD(+)</name>
        <dbReference type="ChEBI" id="CHEBI:57540"/>
    </ligand>
</feature>
<feature type="site" description="Plays an important role in discriminating NADH against NADPH" evidence="1">
    <location>
        <position position="75"/>
    </location>
</feature>
<name>FABV_BURP1</name>
<keyword id="KW-0275">Fatty acid biosynthesis</keyword>
<keyword id="KW-0276">Fatty acid metabolism</keyword>
<keyword id="KW-0444">Lipid biosynthesis</keyword>
<keyword id="KW-0443">Lipid metabolism</keyword>
<keyword id="KW-0520">NAD</keyword>
<keyword id="KW-0560">Oxidoreductase</keyword>
<sequence length="397" mass="42716">MIIKPRVRGFICVTTHPAGCAASVREQIAYVARRGPIERGPKKVLVIGASTGYGLAARIAAAFGAGAATLGVFFERAPADAKPGTAGWYNSAAFHDEAAARGLQATSVNGDAFSDEIKHKTIDAIRRDLGQVDLVVYSAAAPRRTHPKTGVTHQSTLKPIGHAVRLRGIDTDNEAIKETLLQPATPDEIADTVAVMGGEDWRMWIDALDAAGVLADGAKTTAFTYLGEQVTHDIYWNGSIGEAKKDLDRTVLALRGKLAARGGDARVSVLKAVVTQASSAIPMMPLYLSLLFKVMKARGTHEGCIEQVDGLLRDSLYGAQPHVDAEGRLRADRLELDPAVQARVLELWDQVTDDNLYTLTDFAGYKAEFLRLFGFGIDGVDYDAPVEPNVRIPNLIE</sequence>
<reference key="1">
    <citation type="journal article" date="2010" name="Genome Biol. Evol.">
        <title>Continuing evolution of Burkholderia mallei through genome reduction and large-scale rearrangements.</title>
        <authorList>
            <person name="Losada L."/>
            <person name="Ronning C.M."/>
            <person name="DeShazer D."/>
            <person name="Woods D."/>
            <person name="Fedorova N."/>
            <person name="Kim H.S."/>
            <person name="Shabalina S.A."/>
            <person name="Pearson T.R."/>
            <person name="Brinkac L."/>
            <person name="Tan P."/>
            <person name="Nandi T."/>
            <person name="Crabtree J."/>
            <person name="Badger J."/>
            <person name="Beckstrom-Sternberg S."/>
            <person name="Saqib M."/>
            <person name="Schutzer S.E."/>
            <person name="Keim P."/>
            <person name="Nierman W.C."/>
        </authorList>
    </citation>
    <scope>NUCLEOTIDE SEQUENCE [LARGE SCALE GENOMIC DNA]</scope>
    <source>
        <strain>1710b</strain>
    </source>
</reference>
<comment type="function">
    <text evidence="1">Involved in the final reduction of the elongation cycle of fatty acid synthesis (FAS II). Catalyzes the reduction of a carbon-carbon double bond in an enoyl moiety that is covalently linked to an acyl carrier protein (ACP).</text>
</comment>
<comment type="catalytic activity">
    <reaction evidence="1">
        <text>a 2,3-saturated acyl-[ACP] + NAD(+) = a (2E)-enoyl-[ACP] + NADH + H(+)</text>
        <dbReference type="Rhea" id="RHEA:10240"/>
        <dbReference type="Rhea" id="RHEA-COMP:9925"/>
        <dbReference type="Rhea" id="RHEA-COMP:9926"/>
        <dbReference type="ChEBI" id="CHEBI:15378"/>
        <dbReference type="ChEBI" id="CHEBI:57540"/>
        <dbReference type="ChEBI" id="CHEBI:57945"/>
        <dbReference type="ChEBI" id="CHEBI:78784"/>
        <dbReference type="ChEBI" id="CHEBI:78785"/>
        <dbReference type="EC" id="1.3.1.9"/>
    </reaction>
</comment>
<comment type="pathway">
    <text evidence="1">Lipid metabolism; fatty acid biosynthesis.</text>
</comment>
<comment type="subunit">
    <text evidence="1">Monomer.</text>
</comment>
<comment type="similarity">
    <text evidence="1">Belongs to the TER reductase family.</text>
</comment>
<gene>
    <name evidence="1" type="primary">fabV</name>
    <name type="ordered locus">BURPS1710b_1803</name>
</gene>
<proteinExistence type="inferred from homology"/>
<dbReference type="EC" id="1.3.1.9" evidence="1"/>
<dbReference type="EMBL" id="CP000124">
    <property type="protein sequence ID" value="ABA50898.1"/>
    <property type="molecule type" value="Genomic_DNA"/>
</dbReference>
<dbReference type="RefSeq" id="WP_004526792.1">
    <property type="nucleotide sequence ID" value="NC_007434.1"/>
</dbReference>
<dbReference type="SMR" id="Q3JT99"/>
<dbReference type="EnsemblBacteria" id="ABA50898">
    <property type="protein sequence ID" value="ABA50898"/>
    <property type="gene ID" value="BURPS1710b_1803"/>
</dbReference>
<dbReference type="KEGG" id="bpm:BURPS1710b_1803"/>
<dbReference type="HOGENOM" id="CLU_057698_1_0_4"/>
<dbReference type="UniPathway" id="UPA00094"/>
<dbReference type="Proteomes" id="UP000002700">
    <property type="component" value="Chromosome I"/>
</dbReference>
<dbReference type="GO" id="GO:0004318">
    <property type="term" value="F:enoyl-[acyl-carrier-protein] reductase (NADH) activity"/>
    <property type="evidence" value="ECO:0007669"/>
    <property type="project" value="UniProtKB-UniRule"/>
</dbReference>
<dbReference type="GO" id="GO:0051287">
    <property type="term" value="F:NAD binding"/>
    <property type="evidence" value="ECO:0007669"/>
    <property type="project" value="UniProtKB-UniRule"/>
</dbReference>
<dbReference type="GO" id="GO:0050343">
    <property type="term" value="F:trans-2-enoyl-CoA reductase (NADH) activity"/>
    <property type="evidence" value="ECO:0007669"/>
    <property type="project" value="TreeGrafter"/>
</dbReference>
<dbReference type="GO" id="GO:0006633">
    <property type="term" value="P:fatty acid biosynthetic process"/>
    <property type="evidence" value="ECO:0007669"/>
    <property type="project" value="UniProtKB-UniRule"/>
</dbReference>
<dbReference type="FunFam" id="3.40.50.720:FF:000221">
    <property type="entry name" value="Enoyl-[acyl-carrier-protein] reductase [NADH]"/>
    <property type="match status" value="1"/>
</dbReference>
<dbReference type="Gene3D" id="3.40.50.720">
    <property type="entry name" value="NAD(P)-binding Rossmann-like Domain"/>
    <property type="match status" value="1"/>
</dbReference>
<dbReference type="HAMAP" id="MF_01838">
    <property type="entry name" value="FabV_reductase"/>
    <property type="match status" value="1"/>
</dbReference>
<dbReference type="InterPro" id="IPR024906">
    <property type="entry name" value="Eno_Rdtase_FAD-bd_dom"/>
</dbReference>
<dbReference type="InterPro" id="IPR024910">
    <property type="entry name" value="Enoyl-CoA_Rdtase_cat_dom"/>
</dbReference>
<dbReference type="InterPro" id="IPR050048">
    <property type="entry name" value="FabV-like_NADH_b"/>
</dbReference>
<dbReference type="InterPro" id="IPR036291">
    <property type="entry name" value="NAD(P)-bd_dom_sf"/>
</dbReference>
<dbReference type="InterPro" id="IPR010758">
    <property type="entry name" value="Trans-2-enoyl-CoA_reductase"/>
</dbReference>
<dbReference type="NCBIfam" id="NF043048">
    <property type="entry name" value="EnoyACPredFabV"/>
    <property type="match status" value="1"/>
</dbReference>
<dbReference type="NCBIfam" id="NF010177">
    <property type="entry name" value="PRK13656.1"/>
    <property type="match status" value="1"/>
</dbReference>
<dbReference type="PANTHER" id="PTHR37480">
    <property type="entry name" value="ENOYL-[ACYL-CARRIER-PROTEIN] REDUCTASE [NADH]"/>
    <property type="match status" value="1"/>
</dbReference>
<dbReference type="PANTHER" id="PTHR37480:SF1">
    <property type="entry name" value="ENOYL-[ACYL-CARRIER-PROTEIN] REDUCTASE [NADH]"/>
    <property type="match status" value="1"/>
</dbReference>
<dbReference type="Pfam" id="PF07055">
    <property type="entry name" value="Eno-Rase_FAD_bd"/>
    <property type="match status" value="1"/>
</dbReference>
<dbReference type="Pfam" id="PF12242">
    <property type="entry name" value="Eno-Rase_NADH_b"/>
    <property type="match status" value="1"/>
</dbReference>
<dbReference type="Pfam" id="PF12241">
    <property type="entry name" value="Enoyl_reductase"/>
    <property type="match status" value="1"/>
</dbReference>
<dbReference type="SUPFAM" id="SSF51735">
    <property type="entry name" value="NAD(P)-binding Rossmann-fold domains"/>
    <property type="match status" value="1"/>
</dbReference>
<accession>Q3JT99</accession>
<evidence type="ECO:0000255" key="1">
    <source>
        <dbReference type="HAMAP-Rule" id="MF_01838"/>
    </source>
</evidence>
<organism>
    <name type="scientific">Burkholderia pseudomallei (strain 1710b)</name>
    <dbReference type="NCBI Taxonomy" id="320372"/>
    <lineage>
        <taxon>Bacteria</taxon>
        <taxon>Pseudomonadati</taxon>
        <taxon>Pseudomonadota</taxon>
        <taxon>Betaproteobacteria</taxon>
        <taxon>Burkholderiales</taxon>
        <taxon>Burkholderiaceae</taxon>
        <taxon>Burkholderia</taxon>
        <taxon>pseudomallei group</taxon>
    </lineage>
</organism>